<comment type="function">
    <text evidence="1">Catalyzes the condensation of pantoate with beta-alanine in an ATP-dependent reaction via a pantoyl-adenylate intermediate.</text>
</comment>
<comment type="catalytic activity">
    <reaction evidence="1">
        <text>(R)-pantoate + beta-alanine + ATP = (R)-pantothenate + AMP + diphosphate + H(+)</text>
        <dbReference type="Rhea" id="RHEA:10912"/>
        <dbReference type="ChEBI" id="CHEBI:15378"/>
        <dbReference type="ChEBI" id="CHEBI:15980"/>
        <dbReference type="ChEBI" id="CHEBI:29032"/>
        <dbReference type="ChEBI" id="CHEBI:30616"/>
        <dbReference type="ChEBI" id="CHEBI:33019"/>
        <dbReference type="ChEBI" id="CHEBI:57966"/>
        <dbReference type="ChEBI" id="CHEBI:456215"/>
        <dbReference type="EC" id="6.3.2.1"/>
    </reaction>
</comment>
<comment type="pathway">
    <text evidence="1">Cofactor biosynthesis; (R)-pantothenate biosynthesis; (R)-pantothenate from (R)-pantoate and beta-alanine: step 1/1.</text>
</comment>
<comment type="subunit">
    <text evidence="1">Homodimer.</text>
</comment>
<comment type="subcellular location">
    <subcellularLocation>
        <location evidence="1">Cytoplasm</location>
    </subcellularLocation>
</comment>
<comment type="miscellaneous">
    <text evidence="1">The reaction proceeds by a bi uni uni bi ping pong mechanism.</text>
</comment>
<comment type="similarity">
    <text evidence="1">Belongs to the pantothenate synthetase family.</text>
</comment>
<keyword id="KW-0067">ATP-binding</keyword>
<keyword id="KW-0963">Cytoplasm</keyword>
<keyword id="KW-0436">Ligase</keyword>
<keyword id="KW-0547">Nucleotide-binding</keyword>
<keyword id="KW-0566">Pantothenate biosynthesis</keyword>
<reference key="1">
    <citation type="submission" date="2007-12" db="EMBL/GenBank/DDBJ databases">
        <title>Brucella suis ATCC 23445 whole genome shotgun sequencing project.</title>
        <authorList>
            <person name="Setubal J.C."/>
            <person name="Bowns C."/>
            <person name="Boyle S."/>
            <person name="Crasta O.R."/>
            <person name="Czar M.J."/>
            <person name="Dharmanolla C."/>
            <person name="Gillespie J.J."/>
            <person name="Kenyon R.W."/>
            <person name="Lu J."/>
            <person name="Mane S."/>
            <person name="Mohapatra S."/>
            <person name="Nagrani S."/>
            <person name="Purkayastha A."/>
            <person name="Rajasimha H.K."/>
            <person name="Shallom J.M."/>
            <person name="Shallom S."/>
            <person name="Shukla M."/>
            <person name="Snyder E.E."/>
            <person name="Sobral B.W."/>
            <person name="Wattam A.R."/>
            <person name="Will R."/>
            <person name="Williams K."/>
            <person name="Yoo H."/>
            <person name="Bruce D."/>
            <person name="Detter C."/>
            <person name="Munk C."/>
            <person name="Brettin T.S."/>
        </authorList>
    </citation>
    <scope>NUCLEOTIDE SEQUENCE [LARGE SCALE GENOMIC DNA]</scope>
    <source>
        <strain>ATCC 23445 / NCTC 10510</strain>
    </source>
</reference>
<accession>B0CJW0</accession>
<organism>
    <name type="scientific">Brucella suis (strain ATCC 23445 / NCTC 10510)</name>
    <dbReference type="NCBI Taxonomy" id="470137"/>
    <lineage>
        <taxon>Bacteria</taxon>
        <taxon>Pseudomonadati</taxon>
        <taxon>Pseudomonadota</taxon>
        <taxon>Alphaproteobacteria</taxon>
        <taxon>Hyphomicrobiales</taxon>
        <taxon>Brucellaceae</taxon>
        <taxon>Brucella/Ochrobactrum group</taxon>
        <taxon>Brucella</taxon>
    </lineage>
</organism>
<sequence>MQIIHTIEELRQALAPARQQGKKIGFVPTMGYLHKGHLELVRRARVENDVTLVSIFVNPLQFGANEDLGRYPRDLERDAGLLHDAQVDYLFAPTVSDMYPRPMQTVVDVPPLGNQMEGEARPGHFAGVATVVSKLFNIVGPDAAYFGEKDFQQLVIIRRMVDDMAIPVRIVGVETVREDDGLACSSRNVYLTPEQRRAAIIVPQALDEADRLYRSGMDDPDALEAAIRTFIGRQPLAVPEVIAIRDPETLERLPALQGRPILVALFVRVGATRLLDNRVIGHAAPQITQERAA</sequence>
<dbReference type="EC" id="6.3.2.1" evidence="1"/>
<dbReference type="EMBL" id="CP000911">
    <property type="protein sequence ID" value="ABY37451.1"/>
    <property type="molecule type" value="Genomic_DNA"/>
</dbReference>
<dbReference type="RefSeq" id="WP_004682909.1">
    <property type="nucleotide sequence ID" value="NC_010169.1"/>
</dbReference>
<dbReference type="SMR" id="B0CJW0"/>
<dbReference type="GeneID" id="97534282"/>
<dbReference type="KEGG" id="bmt:BSUIS_A0360"/>
<dbReference type="HOGENOM" id="CLU_047148_0_0_5"/>
<dbReference type="UniPathway" id="UPA00028">
    <property type="reaction ID" value="UER00005"/>
</dbReference>
<dbReference type="Proteomes" id="UP000008545">
    <property type="component" value="Chromosome I"/>
</dbReference>
<dbReference type="GO" id="GO:0005829">
    <property type="term" value="C:cytosol"/>
    <property type="evidence" value="ECO:0007669"/>
    <property type="project" value="TreeGrafter"/>
</dbReference>
<dbReference type="GO" id="GO:0005524">
    <property type="term" value="F:ATP binding"/>
    <property type="evidence" value="ECO:0007669"/>
    <property type="project" value="UniProtKB-KW"/>
</dbReference>
<dbReference type="GO" id="GO:0004592">
    <property type="term" value="F:pantoate-beta-alanine ligase activity"/>
    <property type="evidence" value="ECO:0007669"/>
    <property type="project" value="UniProtKB-UniRule"/>
</dbReference>
<dbReference type="GO" id="GO:0015940">
    <property type="term" value="P:pantothenate biosynthetic process"/>
    <property type="evidence" value="ECO:0007669"/>
    <property type="project" value="UniProtKB-UniRule"/>
</dbReference>
<dbReference type="CDD" id="cd00560">
    <property type="entry name" value="PanC"/>
    <property type="match status" value="1"/>
</dbReference>
<dbReference type="FunFam" id="3.40.50.620:FF:000013">
    <property type="entry name" value="Pantothenate synthetase"/>
    <property type="match status" value="1"/>
</dbReference>
<dbReference type="Gene3D" id="3.40.50.620">
    <property type="entry name" value="HUPs"/>
    <property type="match status" value="1"/>
</dbReference>
<dbReference type="Gene3D" id="3.30.1300.10">
    <property type="entry name" value="Pantoate-beta-alanine ligase, C-terminal domain"/>
    <property type="match status" value="1"/>
</dbReference>
<dbReference type="HAMAP" id="MF_00158">
    <property type="entry name" value="PanC"/>
    <property type="match status" value="1"/>
</dbReference>
<dbReference type="InterPro" id="IPR004821">
    <property type="entry name" value="Cyt_trans-like"/>
</dbReference>
<dbReference type="InterPro" id="IPR003721">
    <property type="entry name" value="Pantoate_ligase"/>
</dbReference>
<dbReference type="InterPro" id="IPR042176">
    <property type="entry name" value="Pantoate_ligase_C"/>
</dbReference>
<dbReference type="InterPro" id="IPR014729">
    <property type="entry name" value="Rossmann-like_a/b/a_fold"/>
</dbReference>
<dbReference type="NCBIfam" id="TIGR00125">
    <property type="entry name" value="cyt_tran_rel"/>
    <property type="match status" value="1"/>
</dbReference>
<dbReference type="NCBIfam" id="TIGR00018">
    <property type="entry name" value="panC"/>
    <property type="match status" value="1"/>
</dbReference>
<dbReference type="PANTHER" id="PTHR21299">
    <property type="entry name" value="CYTIDYLATE KINASE/PANTOATE-BETA-ALANINE LIGASE"/>
    <property type="match status" value="1"/>
</dbReference>
<dbReference type="PANTHER" id="PTHR21299:SF1">
    <property type="entry name" value="PANTOATE--BETA-ALANINE LIGASE"/>
    <property type="match status" value="1"/>
</dbReference>
<dbReference type="Pfam" id="PF02569">
    <property type="entry name" value="Pantoate_ligase"/>
    <property type="match status" value="1"/>
</dbReference>
<dbReference type="SUPFAM" id="SSF52374">
    <property type="entry name" value="Nucleotidylyl transferase"/>
    <property type="match status" value="1"/>
</dbReference>
<proteinExistence type="inferred from homology"/>
<protein>
    <recommendedName>
        <fullName evidence="1">Pantothenate synthetase</fullName>
        <shortName evidence="1">PS</shortName>
        <ecNumber evidence="1">6.3.2.1</ecNumber>
    </recommendedName>
    <alternativeName>
        <fullName evidence="1">Pantoate--beta-alanine ligase</fullName>
    </alternativeName>
    <alternativeName>
        <fullName evidence="1">Pantoate-activating enzyme</fullName>
    </alternativeName>
</protein>
<feature type="chain" id="PRO_1000076844" description="Pantothenate synthetase">
    <location>
        <begin position="1"/>
        <end position="293"/>
    </location>
</feature>
<feature type="active site" description="Proton donor" evidence="1">
    <location>
        <position position="37"/>
    </location>
</feature>
<feature type="binding site" evidence="1">
    <location>
        <begin position="30"/>
        <end position="37"/>
    </location>
    <ligand>
        <name>ATP</name>
        <dbReference type="ChEBI" id="CHEBI:30616"/>
    </ligand>
</feature>
<feature type="binding site" evidence="1">
    <location>
        <position position="61"/>
    </location>
    <ligand>
        <name>(R)-pantoate</name>
        <dbReference type="ChEBI" id="CHEBI:15980"/>
    </ligand>
</feature>
<feature type="binding site" evidence="1">
    <location>
        <position position="61"/>
    </location>
    <ligand>
        <name>beta-alanine</name>
        <dbReference type="ChEBI" id="CHEBI:57966"/>
    </ligand>
</feature>
<feature type="binding site" evidence="1">
    <location>
        <begin position="147"/>
        <end position="150"/>
    </location>
    <ligand>
        <name>ATP</name>
        <dbReference type="ChEBI" id="CHEBI:30616"/>
    </ligand>
</feature>
<feature type="binding site" evidence="1">
    <location>
        <position position="153"/>
    </location>
    <ligand>
        <name>(R)-pantoate</name>
        <dbReference type="ChEBI" id="CHEBI:15980"/>
    </ligand>
</feature>
<feature type="binding site" evidence="1">
    <location>
        <position position="176"/>
    </location>
    <ligand>
        <name>ATP</name>
        <dbReference type="ChEBI" id="CHEBI:30616"/>
    </ligand>
</feature>
<feature type="binding site" evidence="1">
    <location>
        <begin position="184"/>
        <end position="187"/>
    </location>
    <ligand>
        <name>ATP</name>
        <dbReference type="ChEBI" id="CHEBI:30616"/>
    </ligand>
</feature>
<gene>
    <name evidence="1" type="primary">panC</name>
    <name type="ordered locus">BSUIS_A0360</name>
</gene>
<name>PANC_BRUSI</name>
<evidence type="ECO:0000255" key="1">
    <source>
        <dbReference type="HAMAP-Rule" id="MF_00158"/>
    </source>
</evidence>